<organism>
    <name type="scientific">Marinomonas sp. (strain MWYL1)</name>
    <dbReference type="NCBI Taxonomy" id="400668"/>
    <lineage>
        <taxon>Bacteria</taxon>
        <taxon>Pseudomonadati</taxon>
        <taxon>Pseudomonadota</taxon>
        <taxon>Gammaproteobacteria</taxon>
        <taxon>Oceanospirillales</taxon>
        <taxon>Oceanospirillaceae</taxon>
        <taxon>Marinomonas</taxon>
    </lineage>
</organism>
<protein>
    <recommendedName>
        <fullName evidence="1">7-cyano-7-deazaguanine synthase</fullName>
        <ecNumber evidence="1">6.3.4.20</ecNumber>
    </recommendedName>
    <alternativeName>
        <fullName evidence="1">7-cyano-7-carbaguanine synthase</fullName>
    </alternativeName>
    <alternativeName>
        <fullName evidence="1">PreQ(0) synthase</fullName>
    </alternativeName>
    <alternativeName>
        <fullName evidence="1">Queuosine biosynthesis protein QueC</fullName>
    </alternativeName>
</protein>
<comment type="function">
    <text evidence="1">Catalyzes the ATP-dependent conversion of 7-carboxy-7-deazaguanine (CDG) to 7-cyano-7-deazaguanine (preQ(0)).</text>
</comment>
<comment type="catalytic activity">
    <reaction evidence="1">
        <text>7-carboxy-7-deazaguanine + NH4(+) + ATP = 7-cyano-7-deazaguanine + ADP + phosphate + H2O + H(+)</text>
        <dbReference type="Rhea" id="RHEA:27982"/>
        <dbReference type="ChEBI" id="CHEBI:15377"/>
        <dbReference type="ChEBI" id="CHEBI:15378"/>
        <dbReference type="ChEBI" id="CHEBI:28938"/>
        <dbReference type="ChEBI" id="CHEBI:30616"/>
        <dbReference type="ChEBI" id="CHEBI:43474"/>
        <dbReference type="ChEBI" id="CHEBI:45075"/>
        <dbReference type="ChEBI" id="CHEBI:61036"/>
        <dbReference type="ChEBI" id="CHEBI:456216"/>
        <dbReference type="EC" id="6.3.4.20"/>
    </reaction>
</comment>
<comment type="cofactor">
    <cofactor evidence="1">
        <name>Zn(2+)</name>
        <dbReference type="ChEBI" id="CHEBI:29105"/>
    </cofactor>
    <text evidence="1">Binds 1 zinc ion per subunit.</text>
</comment>
<comment type="pathway">
    <text evidence="1">Purine metabolism; 7-cyano-7-deazaguanine biosynthesis.</text>
</comment>
<comment type="similarity">
    <text evidence="1">Belongs to the QueC family.</text>
</comment>
<dbReference type="EC" id="6.3.4.20" evidence="1"/>
<dbReference type="EMBL" id="CP000749">
    <property type="protein sequence ID" value="ABR71027.1"/>
    <property type="molecule type" value="Genomic_DNA"/>
</dbReference>
<dbReference type="SMR" id="A6VX48"/>
<dbReference type="STRING" id="400668.Mmwyl1_2105"/>
<dbReference type="KEGG" id="mmw:Mmwyl1_2105"/>
<dbReference type="eggNOG" id="COG0603">
    <property type="taxonomic scope" value="Bacteria"/>
</dbReference>
<dbReference type="HOGENOM" id="CLU_081854_1_0_6"/>
<dbReference type="OrthoDB" id="9789567at2"/>
<dbReference type="UniPathway" id="UPA00391"/>
<dbReference type="GO" id="GO:0005524">
    <property type="term" value="F:ATP binding"/>
    <property type="evidence" value="ECO:0007669"/>
    <property type="project" value="UniProtKB-UniRule"/>
</dbReference>
<dbReference type="GO" id="GO:0016879">
    <property type="term" value="F:ligase activity, forming carbon-nitrogen bonds"/>
    <property type="evidence" value="ECO:0007669"/>
    <property type="project" value="UniProtKB-UniRule"/>
</dbReference>
<dbReference type="GO" id="GO:0008270">
    <property type="term" value="F:zinc ion binding"/>
    <property type="evidence" value="ECO:0007669"/>
    <property type="project" value="UniProtKB-UniRule"/>
</dbReference>
<dbReference type="GO" id="GO:0008616">
    <property type="term" value="P:queuosine biosynthetic process"/>
    <property type="evidence" value="ECO:0007669"/>
    <property type="project" value="UniProtKB-UniRule"/>
</dbReference>
<dbReference type="CDD" id="cd01995">
    <property type="entry name" value="QueC-like"/>
    <property type="match status" value="1"/>
</dbReference>
<dbReference type="Gene3D" id="3.40.50.620">
    <property type="entry name" value="HUPs"/>
    <property type="match status" value="1"/>
</dbReference>
<dbReference type="HAMAP" id="MF_01633">
    <property type="entry name" value="QueC"/>
    <property type="match status" value="1"/>
</dbReference>
<dbReference type="InterPro" id="IPR018317">
    <property type="entry name" value="QueC"/>
</dbReference>
<dbReference type="InterPro" id="IPR014729">
    <property type="entry name" value="Rossmann-like_a/b/a_fold"/>
</dbReference>
<dbReference type="NCBIfam" id="TIGR00364">
    <property type="entry name" value="7-cyano-7-deazaguanine synthase QueC"/>
    <property type="match status" value="1"/>
</dbReference>
<dbReference type="PANTHER" id="PTHR42914">
    <property type="entry name" value="7-CYANO-7-DEAZAGUANINE SYNTHASE"/>
    <property type="match status" value="1"/>
</dbReference>
<dbReference type="PANTHER" id="PTHR42914:SF1">
    <property type="entry name" value="7-CYANO-7-DEAZAGUANINE SYNTHASE"/>
    <property type="match status" value="1"/>
</dbReference>
<dbReference type="Pfam" id="PF06508">
    <property type="entry name" value="QueC"/>
    <property type="match status" value="1"/>
</dbReference>
<dbReference type="PIRSF" id="PIRSF006293">
    <property type="entry name" value="ExsB"/>
    <property type="match status" value="1"/>
</dbReference>
<dbReference type="SUPFAM" id="SSF52402">
    <property type="entry name" value="Adenine nucleotide alpha hydrolases-like"/>
    <property type="match status" value="1"/>
</dbReference>
<gene>
    <name evidence="1" type="primary">queC</name>
    <name type="ordered locus">Mmwyl1_2105</name>
</gene>
<sequence>MSEKAVVVYSGGMDSFTVLNTAIQNGLDVYALSFNYGQKHSKELEVAAHVCRKLGISHKVVDITAINSLMANSSLTGDAEIPEGHYEDDNMKSTVVPNRNMVLLSMAIAYAVSLEAGKVYYGAHSGDHHIYPDCRPEFVEAMNAVSKIANYQSVEIVTPFLHSSKGEILKAGLDMNLNYANTWTCYNGREKSCGKCGACYERLEAFAEQGKTDPLEYEA</sequence>
<keyword id="KW-0067">ATP-binding</keyword>
<keyword id="KW-0436">Ligase</keyword>
<keyword id="KW-0479">Metal-binding</keyword>
<keyword id="KW-0547">Nucleotide-binding</keyword>
<keyword id="KW-0671">Queuosine biosynthesis</keyword>
<keyword id="KW-0862">Zinc</keyword>
<name>QUEC_MARMS</name>
<proteinExistence type="inferred from homology"/>
<accession>A6VX48</accession>
<evidence type="ECO:0000255" key="1">
    <source>
        <dbReference type="HAMAP-Rule" id="MF_01633"/>
    </source>
</evidence>
<feature type="chain" id="PRO_0000336923" description="7-cyano-7-deazaguanine synthase">
    <location>
        <begin position="1"/>
        <end position="219"/>
    </location>
</feature>
<feature type="binding site" evidence="1">
    <location>
        <begin position="9"/>
        <end position="19"/>
    </location>
    <ligand>
        <name>ATP</name>
        <dbReference type="ChEBI" id="CHEBI:30616"/>
    </ligand>
</feature>
<feature type="binding site" evidence="1">
    <location>
        <position position="185"/>
    </location>
    <ligand>
        <name>Zn(2+)</name>
        <dbReference type="ChEBI" id="CHEBI:29105"/>
    </ligand>
</feature>
<feature type="binding site" evidence="1">
    <location>
        <position position="193"/>
    </location>
    <ligand>
        <name>Zn(2+)</name>
        <dbReference type="ChEBI" id="CHEBI:29105"/>
    </ligand>
</feature>
<feature type="binding site" evidence="1">
    <location>
        <position position="196"/>
    </location>
    <ligand>
        <name>Zn(2+)</name>
        <dbReference type="ChEBI" id="CHEBI:29105"/>
    </ligand>
</feature>
<feature type="binding site" evidence="1">
    <location>
        <position position="199"/>
    </location>
    <ligand>
        <name>Zn(2+)</name>
        <dbReference type="ChEBI" id="CHEBI:29105"/>
    </ligand>
</feature>
<reference key="1">
    <citation type="submission" date="2007-06" db="EMBL/GenBank/DDBJ databases">
        <title>Complete sequence of Marinomonas sp. MWYL1.</title>
        <authorList>
            <consortium name="US DOE Joint Genome Institute"/>
            <person name="Copeland A."/>
            <person name="Lucas S."/>
            <person name="Lapidus A."/>
            <person name="Barry K."/>
            <person name="Glavina del Rio T."/>
            <person name="Dalin E."/>
            <person name="Tice H."/>
            <person name="Pitluck S."/>
            <person name="Kiss H."/>
            <person name="Brettin T."/>
            <person name="Bruce D."/>
            <person name="Detter J.C."/>
            <person name="Han C."/>
            <person name="Schmutz J."/>
            <person name="Larimer F."/>
            <person name="Land M."/>
            <person name="Hauser L."/>
            <person name="Kyrpides N."/>
            <person name="Kim E."/>
            <person name="Johnston A.W.B."/>
            <person name="Todd J.D."/>
            <person name="Rogers R."/>
            <person name="Wexler M."/>
            <person name="Bond P.L."/>
            <person name="Li Y."/>
            <person name="Richardson P."/>
        </authorList>
    </citation>
    <scope>NUCLEOTIDE SEQUENCE [LARGE SCALE GENOMIC DNA]</scope>
    <source>
        <strain>MWYL1</strain>
    </source>
</reference>